<accession>Q08910</accession>
<accession>D6W380</accession>
<name>YO387_YEAST</name>
<evidence type="ECO:0000255" key="1"/>
<evidence type="ECO:0000269" key="2">
    <source>
    </source>
</evidence>
<evidence type="ECO:0000269" key="3">
    <source>
    </source>
</evidence>
<evidence type="ECO:0000269" key="4">
    <source>
    </source>
</evidence>
<evidence type="ECO:0000305" key="5"/>
<protein>
    <recommendedName>
        <fullName>VEL1-related protein YOR387C</fullName>
    </recommendedName>
</protein>
<gene>
    <name type="ordered locus">YOR387C</name>
</gene>
<proteinExistence type="evidence at protein level"/>
<sequence length="206" mass="22140">MSFLNIFTFFSVLVSVATAVRFDLTNVTCNNLHGPHCGTYVMEVVGQNGTFLGQSTFAGADVLTESAGDAWARYLGQETRFLPKLTTIASNDTKNFSPLIFTTNIYTCNPQSIGDAMVPFANTVTGEIEYNSWADTADNASFITGLANQLFNSTQYGVQVASCYPNFASVILSTPTVNIFAANETLPDYCTAIQLKAVCPPDAGFA</sequence>
<organism>
    <name type="scientific">Saccharomyces cerevisiae (strain ATCC 204508 / S288c)</name>
    <name type="common">Baker's yeast</name>
    <dbReference type="NCBI Taxonomy" id="559292"/>
    <lineage>
        <taxon>Eukaryota</taxon>
        <taxon>Fungi</taxon>
        <taxon>Dikarya</taxon>
        <taxon>Ascomycota</taxon>
        <taxon>Saccharomycotina</taxon>
        <taxon>Saccharomycetes</taxon>
        <taxon>Saccharomycetales</taxon>
        <taxon>Saccharomycetaceae</taxon>
        <taxon>Saccharomyces</taxon>
    </lineage>
</organism>
<feature type="signal peptide" evidence="1">
    <location>
        <begin position="1"/>
        <end position="19"/>
    </location>
</feature>
<feature type="chain" id="PRO_0000243950" description="VEL1-related protein YOR387C">
    <location>
        <begin position="20"/>
        <end position="206"/>
    </location>
</feature>
<feature type="glycosylation site" description="N-linked (GlcNAc...) asparagine" evidence="1">
    <location>
        <position position="26"/>
    </location>
</feature>
<feature type="glycosylation site" description="N-linked (GlcNAc...) asparagine" evidence="1">
    <location>
        <position position="48"/>
    </location>
</feature>
<feature type="glycosylation site" description="N-linked (GlcNAc...) asparagine" evidence="1">
    <location>
        <position position="91"/>
    </location>
</feature>
<feature type="glycosylation site" description="N-linked (GlcNAc...) asparagine" evidence="1">
    <location>
        <position position="139"/>
    </location>
</feature>
<feature type="glycosylation site" description="N-linked (GlcNAc...) asparagine" evidence="1">
    <location>
        <position position="152"/>
    </location>
</feature>
<feature type="glycosylation site" description="N-linked (GlcNAc...) asparagine" evidence="1">
    <location>
        <position position="183"/>
    </location>
</feature>
<comment type="subcellular location">
    <subcellularLocation>
        <location evidence="2">Cytoplasm</location>
        <location evidence="2">Cytosol</location>
    </subcellularLocation>
</comment>
<comment type="induction">
    <text evidence="3">By zinc depletion.</text>
</comment>
<comment type="PTM">
    <text evidence="4">N-glycosylated.</text>
</comment>
<comment type="similarity">
    <text evidence="5">Belongs to the VEL1 family.</text>
</comment>
<keyword id="KW-0963">Cytoplasm</keyword>
<keyword id="KW-0325">Glycoprotein</keyword>
<keyword id="KW-1185">Reference proteome</keyword>
<keyword id="KW-0732">Signal</keyword>
<keyword id="KW-0862">Zinc</keyword>
<dbReference type="EMBL" id="Z75295">
    <property type="protein sequence ID" value="CAA99719.1"/>
    <property type="molecule type" value="Genomic_DNA"/>
</dbReference>
<dbReference type="EMBL" id="AY692567">
    <property type="protein sequence ID" value="AAT92586.1"/>
    <property type="molecule type" value="Genomic_DNA"/>
</dbReference>
<dbReference type="EMBL" id="BK006948">
    <property type="protein sequence ID" value="DAA11146.1"/>
    <property type="molecule type" value="Genomic_DNA"/>
</dbReference>
<dbReference type="PIR" id="S67299">
    <property type="entry name" value="S67299"/>
</dbReference>
<dbReference type="RefSeq" id="NP_015032.3">
    <property type="nucleotide sequence ID" value="NM_001183807.3"/>
</dbReference>
<dbReference type="BioGRID" id="34768">
    <property type="interactions" value="24"/>
</dbReference>
<dbReference type="DIP" id="DIP-5392N"/>
<dbReference type="FunCoup" id="Q08910">
    <property type="interactions" value="38"/>
</dbReference>
<dbReference type="IntAct" id="Q08910">
    <property type="interactions" value="1"/>
</dbReference>
<dbReference type="STRING" id="4932.YOR387C"/>
<dbReference type="GlyGen" id="Q08910">
    <property type="glycosylation" value="6 sites"/>
</dbReference>
<dbReference type="PaxDb" id="4932-YOR387C"/>
<dbReference type="PeptideAtlas" id="Q08910"/>
<dbReference type="EnsemblFungi" id="YOR387C_mRNA">
    <property type="protein sequence ID" value="YOR387C"/>
    <property type="gene ID" value="YOR387C"/>
</dbReference>
<dbReference type="GeneID" id="854569"/>
<dbReference type="KEGG" id="sce:YOR387C"/>
<dbReference type="AGR" id="SGD:S000005914"/>
<dbReference type="SGD" id="S000005914">
    <property type="gene designation" value="YOR387C"/>
</dbReference>
<dbReference type="VEuPathDB" id="FungiDB:YOR387C"/>
<dbReference type="eggNOG" id="ENOG502RZUS">
    <property type="taxonomic scope" value="Eukaryota"/>
</dbReference>
<dbReference type="GeneTree" id="ENSGT00940000176668"/>
<dbReference type="HOGENOM" id="CLU_1349595_0_0_1"/>
<dbReference type="InParanoid" id="Q08910"/>
<dbReference type="OMA" id="DTKNFSP"/>
<dbReference type="OrthoDB" id="4039163at2759"/>
<dbReference type="BioCyc" id="YEAST:G3O-33849-MONOMER"/>
<dbReference type="BioGRID-ORCS" id="854569">
    <property type="hits" value="0 hits in 10 CRISPR screens"/>
</dbReference>
<dbReference type="PRO" id="PR:Q08910"/>
<dbReference type="Proteomes" id="UP000002311">
    <property type="component" value="Chromosome XV"/>
</dbReference>
<dbReference type="RNAct" id="Q08910">
    <property type="molecule type" value="protein"/>
</dbReference>
<dbReference type="GO" id="GO:0005829">
    <property type="term" value="C:cytosol"/>
    <property type="evidence" value="ECO:0007669"/>
    <property type="project" value="UniProtKB-SubCell"/>
</dbReference>
<dbReference type="InterPro" id="IPR019435">
    <property type="entry name" value="Vel1-like"/>
</dbReference>
<dbReference type="Pfam" id="PF10339">
    <property type="entry name" value="Vel1p"/>
    <property type="match status" value="1"/>
</dbReference>
<reference key="1">
    <citation type="journal article" date="1997" name="Nature">
        <title>The nucleotide sequence of Saccharomyces cerevisiae chromosome XV.</title>
        <authorList>
            <person name="Dujon B."/>
            <person name="Albermann K."/>
            <person name="Aldea M."/>
            <person name="Alexandraki D."/>
            <person name="Ansorge W."/>
            <person name="Arino J."/>
            <person name="Benes V."/>
            <person name="Bohn C."/>
            <person name="Bolotin-Fukuhara M."/>
            <person name="Bordonne R."/>
            <person name="Boyer J."/>
            <person name="Camasses A."/>
            <person name="Casamayor A."/>
            <person name="Casas C."/>
            <person name="Cheret G."/>
            <person name="Cziepluch C."/>
            <person name="Daignan-Fornier B."/>
            <person name="Dang V.-D."/>
            <person name="de Haan M."/>
            <person name="Delius H."/>
            <person name="Durand P."/>
            <person name="Fairhead C."/>
            <person name="Feldmann H."/>
            <person name="Gaillon L."/>
            <person name="Galisson F."/>
            <person name="Gamo F.-J."/>
            <person name="Gancedo C."/>
            <person name="Goffeau A."/>
            <person name="Goulding S.E."/>
            <person name="Grivell L.A."/>
            <person name="Habbig B."/>
            <person name="Hand N.J."/>
            <person name="Hani J."/>
            <person name="Hattenhorst U."/>
            <person name="Hebling U."/>
            <person name="Hernando Y."/>
            <person name="Herrero E."/>
            <person name="Heumann K."/>
            <person name="Hiesel R."/>
            <person name="Hilger F."/>
            <person name="Hofmann B."/>
            <person name="Hollenberg C.P."/>
            <person name="Hughes B."/>
            <person name="Jauniaux J.-C."/>
            <person name="Kalogeropoulos A."/>
            <person name="Katsoulou C."/>
            <person name="Kordes E."/>
            <person name="Lafuente M.J."/>
            <person name="Landt O."/>
            <person name="Louis E.J."/>
            <person name="Maarse A.C."/>
            <person name="Madania A."/>
            <person name="Mannhaupt G."/>
            <person name="Marck C."/>
            <person name="Martin R.P."/>
            <person name="Mewes H.-W."/>
            <person name="Michaux G."/>
            <person name="Paces V."/>
            <person name="Parle-McDermott A.G."/>
            <person name="Pearson B.M."/>
            <person name="Perrin A."/>
            <person name="Pettersson B."/>
            <person name="Poch O."/>
            <person name="Pohl T.M."/>
            <person name="Poirey R."/>
            <person name="Portetelle D."/>
            <person name="Pujol A."/>
            <person name="Purnelle B."/>
            <person name="Ramezani Rad M."/>
            <person name="Rechmann S."/>
            <person name="Schwager C."/>
            <person name="Schweizer M."/>
            <person name="Sor F."/>
            <person name="Sterky F."/>
            <person name="Tarassov I.A."/>
            <person name="Teodoru C."/>
            <person name="Tettelin H."/>
            <person name="Thierry A."/>
            <person name="Tobiasch E."/>
            <person name="Tzermia M."/>
            <person name="Uhlen M."/>
            <person name="Unseld M."/>
            <person name="Valens M."/>
            <person name="Vandenbol M."/>
            <person name="Vetter I."/>
            <person name="Vlcek C."/>
            <person name="Voet M."/>
            <person name="Volckaert G."/>
            <person name="Voss H."/>
            <person name="Wambutt R."/>
            <person name="Wedler H."/>
            <person name="Wiemann S."/>
            <person name="Winsor B."/>
            <person name="Wolfe K.H."/>
            <person name="Zollner A."/>
            <person name="Zumstein E."/>
            <person name="Kleine K."/>
        </authorList>
    </citation>
    <scope>NUCLEOTIDE SEQUENCE [LARGE SCALE GENOMIC DNA]</scope>
    <source>
        <strain>ATCC 204508 / S288c</strain>
    </source>
</reference>
<reference key="2">
    <citation type="journal article" date="2014" name="G3 (Bethesda)">
        <title>The reference genome sequence of Saccharomyces cerevisiae: Then and now.</title>
        <authorList>
            <person name="Engel S.R."/>
            <person name="Dietrich F.S."/>
            <person name="Fisk D.G."/>
            <person name="Binkley G."/>
            <person name="Balakrishnan R."/>
            <person name="Costanzo M.C."/>
            <person name="Dwight S.S."/>
            <person name="Hitz B.C."/>
            <person name="Karra K."/>
            <person name="Nash R.S."/>
            <person name="Weng S."/>
            <person name="Wong E.D."/>
            <person name="Lloyd P."/>
            <person name="Skrzypek M.S."/>
            <person name="Miyasato S.R."/>
            <person name="Simison M."/>
            <person name="Cherry J.M."/>
        </authorList>
    </citation>
    <scope>GENOME REANNOTATION</scope>
    <source>
        <strain>ATCC 204508 / S288c</strain>
    </source>
</reference>
<reference key="3">
    <citation type="journal article" date="2007" name="Genome Res.">
        <title>Approaching a complete repository of sequence-verified protein-encoding clones for Saccharomyces cerevisiae.</title>
        <authorList>
            <person name="Hu Y."/>
            <person name="Rolfs A."/>
            <person name="Bhullar B."/>
            <person name="Murthy T.V.S."/>
            <person name="Zhu C."/>
            <person name="Berger M.F."/>
            <person name="Camargo A.A."/>
            <person name="Kelley F."/>
            <person name="McCarron S."/>
            <person name="Jepson D."/>
            <person name="Richardson A."/>
            <person name="Raphael J."/>
            <person name="Moreira D."/>
            <person name="Taycher E."/>
            <person name="Zuo D."/>
            <person name="Mohr S."/>
            <person name="Kane M.F."/>
            <person name="Williamson J."/>
            <person name="Simpson A.J.G."/>
            <person name="Bulyk M.L."/>
            <person name="Harlow E."/>
            <person name="Marsischky G."/>
            <person name="Kolodner R.D."/>
            <person name="LaBaer J."/>
        </authorList>
    </citation>
    <scope>NUCLEOTIDE SEQUENCE [GENOMIC DNA]</scope>
    <source>
        <strain>ATCC 204508 / S288c</strain>
    </source>
</reference>
<reference key="4">
    <citation type="journal article" date="2002" name="Curr. Genet.">
        <title>Sequence-based approach for identification of cell wall proteins in Saccharomyces cerevisiae.</title>
        <authorList>
            <person name="Terashima H."/>
            <person name="Fukuchi S."/>
            <person name="Nakai K."/>
            <person name="Arisawa M."/>
            <person name="Hamada K."/>
            <person name="Yabuki N."/>
            <person name="Kitada K."/>
        </authorList>
    </citation>
    <scope>SUBCELLULAR LOCATION</scope>
</reference>
<reference key="5">
    <citation type="journal article" date="2003" name="Appl. Environ. Microbiol.">
        <title>Application of genome-wide expression analysis to identify molecular markers useful in monitoring industrial fermentations.</title>
        <authorList>
            <person name="Higgins V.J."/>
            <person name="Rogers P.J."/>
            <person name="Dawes I.W."/>
        </authorList>
    </citation>
    <scope>INDUCTION BY ZINC DEPLETION</scope>
</reference>
<reference key="6">
    <citation type="journal article" date="2009" name="Mol. Syst. Biol.">
        <title>Global analysis of the glycoproteome in Saccharomyces cerevisiae reveals new roles for protein glycosylation in eukaryotes.</title>
        <authorList>
            <person name="Kung L.A."/>
            <person name="Tao S.-C."/>
            <person name="Qian J."/>
            <person name="Smith M.G."/>
            <person name="Snyder M."/>
            <person name="Zhu H."/>
        </authorList>
    </citation>
    <scope>GLYCOSYLATION [LARGE SCALE ANALYSIS]</scope>
</reference>